<accession>Q6HP94</accession>
<gene>
    <name evidence="1" type="primary">ligA</name>
    <name type="ordered locus">BT9727_0276</name>
</gene>
<organism>
    <name type="scientific">Bacillus thuringiensis subsp. konkukian (strain 97-27)</name>
    <dbReference type="NCBI Taxonomy" id="281309"/>
    <lineage>
        <taxon>Bacteria</taxon>
        <taxon>Bacillati</taxon>
        <taxon>Bacillota</taxon>
        <taxon>Bacilli</taxon>
        <taxon>Bacillales</taxon>
        <taxon>Bacillaceae</taxon>
        <taxon>Bacillus</taxon>
        <taxon>Bacillus cereus group</taxon>
    </lineage>
</organism>
<comment type="function">
    <text evidence="1">DNA ligase that catalyzes the formation of phosphodiester linkages between 5'-phosphoryl and 3'-hydroxyl groups in double-stranded DNA using NAD as a coenzyme and as the energy source for the reaction. It is essential for DNA replication and repair of damaged DNA.</text>
</comment>
<comment type="catalytic activity">
    <reaction evidence="1">
        <text>NAD(+) + (deoxyribonucleotide)n-3'-hydroxyl + 5'-phospho-(deoxyribonucleotide)m = (deoxyribonucleotide)n+m + AMP + beta-nicotinamide D-nucleotide.</text>
        <dbReference type="EC" id="6.5.1.2"/>
    </reaction>
</comment>
<comment type="cofactor">
    <cofactor evidence="1">
        <name>Mg(2+)</name>
        <dbReference type="ChEBI" id="CHEBI:18420"/>
    </cofactor>
    <cofactor evidence="1">
        <name>Mn(2+)</name>
        <dbReference type="ChEBI" id="CHEBI:29035"/>
    </cofactor>
</comment>
<comment type="similarity">
    <text evidence="1">Belongs to the NAD-dependent DNA ligase family. LigA subfamily.</text>
</comment>
<dbReference type="EC" id="6.5.1.2" evidence="1"/>
<dbReference type="EMBL" id="AE017355">
    <property type="protein sequence ID" value="AAT61280.1"/>
    <property type="molecule type" value="Genomic_DNA"/>
</dbReference>
<dbReference type="RefSeq" id="WP_000031442.1">
    <property type="nucleotide sequence ID" value="NC_005957.1"/>
</dbReference>
<dbReference type="RefSeq" id="YP_034626.1">
    <property type="nucleotide sequence ID" value="NC_005957.1"/>
</dbReference>
<dbReference type="SMR" id="Q6HP94"/>
<dbReference type="KEGG" id="btk:BT9727_0276"/>
<dbReference type="PATRIC" id="fig|281309.8.peg.294"/>
<dbReference type="HOGENOM" id="CLU_007764_2_1_9"/>
<dbReference type="Proteomes" id="UP000001301">
    <property type="component" value="Chromosome"/>
</dbReference>
<dbReference type="GO" id="GO:0005829">
    <property type="term" value="C:cytosol"/>
    <property type="evidence" value="ECO:0007669"/>
    <property type="project" value="TreeGrafter"/>
</dbReference>
<dbReference type="GO" id="GO:0003677">
    <property type="term" value="F:DNA binding"/>
    <property type="evidence" value="ECO:0007669"/>
    <property type="project" value="InterPro"/>
</dbReference>
<dbReference type="GO" id="GO:0003911">
    <property type="term" value="F:DNA ligase (NAD+) activity"/>
    <property type="evidence" value="ECO:0007669"/>
    <property type="project" value="UniProtKB-UniRule"/>
</dbReference>
<dbReference type="GO" id="GO:0046872">
    <property type="term" value="F:metal ion binding"/>
    <property type="evidence" value="ECO:0007669"/>
    <property type="project" value="UniProtKB-KW"/>
</dbReference>
<dbReference type="GO" id="GO:0006281">
    <property type="term" value="P:DNA repair"/>
    <property type="evidence" value="ECO:0007669"/>
    <property type="project" value="UniProtKB-KW"/>
</dbReference>
<dbReference type="GO" id="GO:0006260">
    <property type="term" value="P:DNA replication"/>
    <property type="evidence" value="ECO:0007669"/>
    <property type="project" value="UniProtKB-KW"/>
</dbReference>
<dbReference type="CDD" id="cd17748">
    <property type="entry name" value="BRCT_DNA_ligase_like"/>
    <property type="match status" value="1"/>
</dbReference>
<dbReference type="CDD" id="cd00114">
    <property type="entry name" value="LIGANc"/>
    <property type="match status" value="1"/>
</dbReference>
<dbReference type="FunFam" id="1.10.150.20:FF:000006">
    <property type="entry name" value="DNA ligase"/>
    <property type="match status" value="1"/>
</dbReference>
<dbReference type="FunFam" id="1.10.150.20:FF:000007">
    <property type="entry name" value="DNA ligase"/>
    <property type="match status" value="1"/>
</dbReference>
<dbReference type="FunFam" id="1.10.287.610:FF:000002">
    <property type="entry name" value="DNA ligase"/>
    <property type="match status" value="1"/>
</dbReference>
<dbReference type="FunFam" id="2.40.50.140:FF:000012">
    <property type="entry name" value="DNA ligase"/>
    <property type="match status" value="1"/>
</dbReference>
<dbReference type="FunFam" id="3.30.470.30:FF:000001">
    <property type="entry name" value="DNA ligase"/>
    <property type="match status" value="1"/>
</dbReference>
<dbReference type="FunFam" id="3.40.50.10190:FF:000026">
    <property type="entry name" value="DNA ligase"/>
    <property type="match status" value="1"/>
</dbReference>
<dbReference type="FunFam" id="6.20.10.30:FF:000002">
    <property type="entry name" value="DNA ligase"/>
    <property type="match status" value="1"/>
</dbReference>
<dbReference type="Gene3D" id="6.20.10.30">
    <property type="match status" value="1"/>
</dbReference>
<dbReference type="Gene3D" id="1.10.150.20">
    <property type="entry name" value="5' to 3' exonuclease, C-terminal subdomain"/>
    <property type="match status" value="2"/>
</dbReference>
<dbReference type="Gene3D" id="3.40.50.10190">
    <property type="entry name" value="BRCT domain"/>
    <property type="match status" value="1"/>
</dbReference>
<dbReference type="Gene3D" id="3.30.470.30">
    <property type="entry name" value="DNA ligase/mRNA capping enzyme"/>
    <property type="match status" value="1"/>
</dbReference>
<dbReference type="Gene3D" id="1.10.287.610">
    <property type="entry name" value="Helix hairpin bin"/>
    <property type="match status" value="1"/>
</dbReference>
<dbReference type="Gene3D" id="2.40.50.140">
    <property type="entry name" value="Nucleic acid-binding proteins"/>
    <property type="match status" value="1"/>
</dbReference>
<dbReference type="HAMAP" id="MF_01588">
    <property type="entry name" value="DNA_ligase_A"/>
    <property type="match status" value="1"/>
</dbReference>
<dbReference type="InterPro" id="IPR001357">
    <property type="entry name" value="BRCT_dom"/>
</dbReference>
<dbReference type="InterPro" id="IPR036420">
    <property type="entry name" value="BRCT_dom_sf"/>
</dbReference>
<dbReference type="InterPro" id="IPR041663">
    <property type="entry name" value="DisA/LigA_HHH"/>
</dbReference>
<dbReference type="InterPro" id="IPR001679">
    <property type="entry name" value="DNA_ligase"/>
</dbReference>
<dbReference type="InterPro" id="IPR018239">
    <property type="entry name" value="DNA_ligase_AS"/>
</dbReference>
<dbReference type="InterPro" id="IPR033136">
    <property type="entry name" value="DNA_ligase_CS"/>
</dbReference>
<dbReference type="InterPro" id="IPR013839">
    <property type="entry name" value="DNAligase_adenylation"/>
</dbReference>
<dbReference type="InterPro" id="IPR013840">
    <property type="entry name" value="DNAligase_N"/>
</dbReference>
<dbReference type="InterPro" id="IPR003583">
    <property type="entry name" value="Hlx-hairpin-Hlx_DNA-bd_motif"/>
</dbReference>
<dbReference type="InterPro" id="IPR012340">
    <property type="entry name" value="NA-bd_OB-fold"/>
</dbReference>
<dbReference type="InterPro" id="IPR004150">
    <property type="entry name" value="NAD_DNA_ligase_OB"/>
</dbReference>
<dbReference type="InterPro" id="IPR010994">
    <property type="entry name" value="RuvA_2-like"/>
</dbReference>
<dbReference type="InterPro" id="IPR004149">
    <property type="entry name" value="Znf_DNAligase_C4"/>
</dbReference>
<dbReference type="NCBIfam" id="TIGR00575">
    <property type="entry name" value="dnlj"/>
    <property type="match status" value="1"/>
</dbReference>
<dbReference type="NCBIfam" id="NF005932">
    <property type="entry name" value="PRK07956.1"/>
    <property type="match status" value="1"/>
</dbReference>
<dbReference type="PANTHER" id="PTHR23389">
    <property type="entry name" value="CHROMOSOME TRANSMISSION FIDELITY FACTOR 18"/>
    <property type="match status" value="1"/>
</dbReference>
<dbReference type="PANTHER" id="PTHR23389:SF9">
    <property type="entry name" value="DNA LIGASE"/>
    <property type="match status" value="1"/>
</dbReference>
<dbReference type="Pfam" id="PF00533">
    <property type="entry name" value="BRCT"/>
    <property type="match status" value="1"/>
</dbReference>
<dbReference type="Pfam" id="PF01653">
    <property type="entry name" value="DNA_ligase_aden"/>
    <property type="match status" value="1"/>
</dbReference>
<dbReference type="Pfam" id="PF03120">
    <property type="entry name" value="DNA_ligase_OB"/>
    <property type="match status" value="1"/>
</dbReference>
<dbReference type="Pfam" id="PF03119">
    <property type="entry name" value="DNA_ligase_ZBD"/>
    <property type="match status" value="1"/>
</dbReference>
<dbReference type="Pfam" id="PF12826">
    <property type="entry name" value="HHH_2"/>
    <property type="match status" value="1"/>
</dbReference>
<dbReference type="Pfam" id="PF14520">
    <property type="entry name" value="HHH_5"/>
    <property type="match status" value="1"/>
</dbReference>
<dbReference type="Pfam" id="PF22745">
    <property type="entry name" value="Nlig-Ia"/>
    <property type="match status" value="1"/>
</dbReference>
<dbReference type="PIRSF" id="PIRSF001604">
    <property type="entry name" value="LigA"/>
    <property type="match status" value="1"/>
</dbReference>
<dbReference type="SMART" id="SM00292">
    <property type="entry name" value="BRCT"/>
    <property type="match status" value="1"/>
</dbReference>
<dbReference type="SMART" id="SM00278">
    <property type="entry name" value="HhH1"/>
    <property type="match status" value="3"/>
</dbReference>
<dbReference type="SMART" id="SM00532">
    <property type="entry name" value="LIGANc"/>
    <property type="match status" value="1"/>
</dbReference>
<dbReference type="SUPFAM" id="SSF52113">
    <property type="entry name" value="BRCT domain"/>
    <property type="match status" value="1"/>
</dbReference>
<dbReference type="SUPFAM" id="SSF56091">
    <property type="entry name" value="DNA ligase/mRNA capping enzyme, catalytic domain"/>
    <property type="match status" value="1"/>
</dbReference>
<dbReference type="SUPFAM" id="SSF50249">
    <property type="entry name" value="Nucleic acid-binding proteins"/>
    <property type="match status" value="1"/>
</dbReference>
<dbReference type="SUPFAM" id="SSF47781">
    <property type="entry name" value="RuvA domain 2-like"/>
    <property type="match status" value="1"/>
</dbReference>
<dbReference type="PROSITE" id="PS50172">
    <property type="entry name" value="BRCT"/>
    <property type="match status" value="1"/>
</dbReference>
<dbReference type="PROSITE" id="PS01055">
    <property type="entry name" value="DNA_LIGASE_N1"/>
    <property type="match status" value="1"/>
</dbReference>
<dbReference type="PROSITE" id="PS01056">
    <property type="entry name" value="DNA_LIGASE_N2"/>
    <property type="match status" value="1"/>
</dbReference>
<sequence length="669" mass="75152">MSKEIAKKRIEELRDLLNTFNYQYHVLDNPSVSDAEYDRNMQELIKLEAENPEFMSEDSPSVRVGGTVLDIFEKVTHKSPMLSLGNAFNEGDLRDFDRRVRQGIDDANVRYICELKIDGLAVSLHYEKGRFIQGATRGDGVTGEDITQNLKTIKAIPLRLNEEVTLEARGEAYMPKRSFVKLNEEKEQNGEDVFANPRNAAAGSIRQLDPKIAAKRNLSMFVYGLANVEEKTIPSHSESLDFLGELGFKTNPNRRTCETIEEVIAYVEEWQEKRPHLDYEIDGIVIKVDDVALQESLGTTAKSPRWAIAYKFPAEEVVTRLTGIELSVGRTGVVTPTAELEPVRVAGTIVRRASLHNEDLIREKDIRIGDYVVVKKAGDIIPEVVNVIFDKRTGEEEEYHMPTHCPACESELVRLEEEVALRCINPTCPAQIREGLIHFVSRNAMNIDGLGERVITQLFDADYIRTFADLYSLTKEQLLQLERFGEKSATNLVQAIENSKENSLERLLFGLGIRHVGAKAARTFAEHFETMDALVKATEEELKAINEIGEKMAQSVVAYFDNEDVLELLQQFKEYGVNMTYKGIKIADLQNVESYFAGKTVVLTGKLEVMGRSEAKKKIEALGGKVTGSVSKSTDLVVAGEAAGSKLAQAEKHNVEVWNEERFLQELNK</sequence>
<feature type="chain" id="PRO_0000313129" description="DNA ligase">
    <location>
        <begin position="1"/>
        <end position="669"/>
    </location>
</feature>
<feature type="domain" description="BRCT" evidence="1">
    <location>
        <begin position="591"/>
        <end position="669"/>
    </location>
</feature>
<feature type="active site" description="N6-AMP-lysine intermediate" evidence="1">
    <location>
        <position position="116"/>
    </location>
</feature>
<feature type="binding site" evidence="1">
    <location>
        <begin position="34"/>
        <end position="38"/>
    </location>
    <ligand>
        <name>NAD(+)</name>
        <dbReference type="ChEBI" id="CHEBI:57540"/>
    </ligand>
</feature>
<feature type="binding site" evidence="1">
    <location>
        <begin position="83"/>
        <end position="84"/>
    </location>
    <ligand>
        <name>NAD(+)</name>
        <dbReference type="ChEBI" id="CHEBI:57540"/>
    </ligand>
</feature>
<feature type="binding site" evidence="1">
    <location>
        <position position="114"/>
    </location>
    <ligand>
        <name>NAD(+)</name>
        <dbReference type="ChEBI" id="CHEBI:57540"/>
    </ligand>
</feature>
<feature type="binding site" evidence="1">
    <location>
        <position position="137"/>
    </location>
    <ligand>
        <name>NAD(+)</name>
        <dbReference type="ChEBI" id="CHEBI:57540"/>
    </ligand>
</feature>
<feature type="binding site" evidence="1">
    <location>
        <position position="171"/>
    </location>
    <ligand>
        <name>NAD(+)</name>
        <dbReference type="ChEBI" id="CHEBI:57540"/>
    </ligand>
</feature>
<feature type="binding site" evidence="1">
    <location>
        <position position="287"/>
    </location>
    <ligand>
        <name>NAD(+)</name>
        <dbReference type="ChEBI" id="CHEBI:57540"/>
    </ligand>
</feature>
<feature type="binding site" evidence="1">
    <location>
        <position position="311"/>
    </location>
    <ligand>
        <name>NAD(+)</name>
        <dbReference type="ChEBI" id="CHEBI:57540"/>
    </ligand>
</feature>
<feature type="binding site" evidence="1">
    <location>
        <position position="405"/>
    </location>
    <ligand>
        <name>Zn(2+)</name>
        <dbReference type="ChEBI" id="CHEBI:29105"/>
    </ligand>
</feature>
<feature type="binding site" evidence="1">
    <location>
        <position position="408"/>
    </location>
    <ligand>
        <name>Zn(2+)</name>
        <dbReference type="ChEBI" id="CHEBI:29105"/>
    </ligand>
</feature>
<feature type="binding site" evidence="1">
    <location>
        <position position="423"/>
    </location>
    <ligand>
        <name>Zn(2+)</name>
        <dbReference type="ChEBI" id="CHEBI:29105"/>
    </ligand>
</feature>
<feature type="binding site" evidence="1">
    <location>
        <position position="428"/>
    </location>
    <ligand>
        <name>Zn(2+)</name>
        <dbReference type="ChEBI" id="CHEBI:29105"/>
    </ligand>
</feature>
<protein>
    <recommendedName>
        <fullName evidence="1">DNA ligase</fullName>
        <ecNumber evidence="1">6.5.1.2</ecNumber>
    </recommendedName>
    <alternativeName>
        <fullName evidence="1">Polydeoxyribonucleotide synthase [NAD(+)]</fullName>
    </alternativeName>
</protein>
<reference key="1">
    <citation type="journal article" date="2006" name="J. Bacteriol.">
        <title>Pathogenomic sequence analysis of Bacillus cereus and Bacillus thuringiensis isolates closely related to Bacillus anthracis.</title>
        <authorList>
            <person name="Han C.S."/>
            <person name="Xie G."/>
            <person name="Challacombe J.F."/>
            <person name="Altherr M.R."/>
            <person name="Bhotika S.S."/>
            <person name="Bruce D."/>
            <person name="Campbell C.S."/>
            <person name="Campbell M.L."/>
            <person name="Chen J."/>
            <person name="Chertkov O."/>
            <person name="Cleland C."/>
            <person name="Dimitrijevic M."/>
            <person name="Doggett N.A."/>
            <person name="Fawcett J.J."/>
            <person name="Glavina T."/>
            <person name="Goodwin L.A."/>
            <person name="Hill K.K."/>
            <person name="Hitchcock P."/>
            <person name="Jackson P.J."/>
            <person name="Keim P."/>
            <person name="Kewalramani A.R."/>
            <person name="Longmire J."/>
            <person name="Lucas S."/>
            <person name="Malfatti S."/>
            <person name="McMurry K."/>
            <person name="Meincke L.J."/>
            <person name="Misra M."/>
            <person name="Moseman B.L."/>
            <person name="Mundt M."/>
            <person name="Munk A.C."/>
            <person name="Okinaka R.T."/>
            <person name="Parson-Quintana B."/>
            <person name="Reilly L.P."/>
            <person name="Richardson P."/>
            <person name="Robinson D.L."/>
            <person name="Rubin E."/>
            <person name="Saunders E."/>
            <person name="Tapia R."/>
            <person name="Tesmer J.G."/>
            <person name="Thayer N."/>
            <person name="Thompson L.S."/>
            <person name="Tice H."/>
            <person name="Ticknor L.O."/>
            <person name="Wills P.L."/>
            <person name="Brettin T.S."/>
            <person name="Gilna P."/>
        </authorList>
    </citation>
    <scope>NUCLEOTIDE SEQUENCE [LARGE SCALE GENOMIC DNA]</scope>
    <source>
        <strain>97-27</strain>
    </source>
</reference>
<proteinExistence type="inferred from homology"/>
<name>DNLJ_BACHK</name>
<keyword id="KW-0227">DNA damage</keyword>
<keyword id="KW-0234">DNA repair</keyword>
<keyword id="KW-0235">DNA replication</keyword>
<keyword id="KW-0436">Ligase</keyword>
<keyword id="KW-0460">Magnesium</keyword>
<keyword id="KW-0464">Manganese</keyword>
<keyword id="KW-0479">Metal-binding</keyword>
<keyword id="KW-0520">NAD</keyword>
<keyword id="KW-0862">Zinc</keyword>
<evidence type="ECO:0000255" key="1">
    <source>
        <dbReference type="HAMAP-Rule" id="MF_01588"/>
    </source>
</evidence>